<protein>
    <recommendedName>
        <fullName>Histone H1.4</fullName>
    </recommendedName>
    <alternativeName>
        <fullName>Histone H1-like protein 4</fullName>
    </alternativeName>
</protein>
<evidence type="ECO:0000250" key="1"/>
<evidence type="ECO:0000250" key="2">
    <source>
        <dbReference type="UniProtKB" id="P10771"/>
    </source>
</evidence>
<evidence type="ECO:0000255" key="3">
    <source>
        <dbReference type="PROSITE-ProRule" id="PRU00837"/>
    </source>
</evidence>
<evidence type="ECO:0000256" key="4">
    <source>
        <dbReference type="SAM" id="MobiDB-lite"/>
    </source>
</evidence>
<evidence type="ECO:0000305" key="5"/>
<reference key="1">
    <citation type="journal article" date="2001" name="Development">
        <title>A single histone H1 isoform (H1.1) is essential for chromatin silencing and germline development in Caenorhabditis elegans.</title>
        <authorList>
            <person name="Jedrusik M.A."/>
            <person name="Schulze E."/>
        </authorList>
    </citation>
    <scope>NUCLEOTIDE SEQUENCE [GENOMIC DNA / MRNA]</scope>
    <source>
        <strain>Bristol N2</strain>
    </source>
</reference>
<reference key="2">
    <citation type="journal article" date="1998" name="Science">
        <title>Genome sequence of the nematode C. elegans: a platform for investigating biology.</title>
        <authorList>
            <consortium name="The C. elegans sequencing consortium"/>
        </authorList>
    </citation>
    <scope>NUCLEOTIDE SEQUENCE [LARGE SCALE GENOMIC DNA]</scope>
    <source>
        <strain>Bristol N2</strain>
    </source>
</reference>
<organism>
    <name type="scientific">Caenorhabditis elegans</name>
    <dbReference type="NCBI Taxonomy" id="6239"/>
    <lineage>
        <taxon>Eukaryota</taxon>
        <taxon>Metazoa</taxon>
        <taxon>Ecdysozoa</taxon>
        <taxon>Nematoda</taxon>
        <taxon>Chromadorea</taxon>
        <taxon>Rhabditida</taxon>
        <taxon>Rhabditina</taxon>
        <taxon>Rhabditomorpha</taxon>
        <taxon>Rhabditoidea</taxon>
        <taxon>Rhabditidae</taxon>
        <taxon>Peloderinae</taxon>
        <taxon>Caenorhabditis</taxon>
    </lineage>
</organism>
<keyword id="KW-0007">Acetylation</keyword>
<keyword id="KW-0158">Chromosome</keyword>
<keyword id="KW-0238">DNA-binding</keyword>
<keyword id="KW-0539">Nucleus</keyword>
<keyword id="KW-1185">Reference proteome</keyword>
<name>H14_CAEEL</name>
<proteinExistence type="evidence at transcript level"/>
<comment type="function">
    <text evidence="1">Histones H1 are necessary for the condensation of nucleosome chains into higher-order structures.</text>
</comment>
<comment type="subcellular location">
    <subcellularLocation>
        <location evidence="3">Nucleus</location>
    </subcellularLocation>
    <subcellularLocation>
        <location evidence="3">Chromosome</location>
    </subcellularLocation>
</comment>
<comment type="similarity">
    <text evidence="3">Belongs to the histone H1/H5 family.</text>
</comment>
<feature type="initiator methionine" description="Removed" evidence="2">
    <location>
        <position position="1"/>
    </location>
</feature>
<feature type="chain" id="PRO_0000195984" description="Histone H1.4">
    <location>
        <begin position="2"/>
        <end position="253"/>
    </location>
</feature>
<feature type="domain" description="H15" evidence="3">
    <location>
        <begin position="51"/>
        <end position="127"/>
    </location>
</feature>
<feature type="region of interest" description="Disordered" evidence="4">
    <location>
        <begin position="1"/>
        <end position="43"/>
    </location>
</feature>
<feature type="region of interest" description="Disordered" evidence="4">
    <location>
        <begin position="134"/>
        <end position="253"/>
    </location>
</feature>
<feature type="compositionally biased region" description="Low complexity" evidence="4">
    <location>
        <begin position="1"/>
        <end position="33"/>
    </location>
</feature>
<feature type="compositionally biased region" description="Basic and acidic residues" evidence="4">
    <location>
        <begin position="139"/>
        <end position="149"/>
    </location>
</feature>
<feature type="compositionally biased region" description="Basic and acidic residues" evidence="4">
    <location>
        <begin position="188"/>
        <end position="200"/>
    </location>
</feature>
<feature type="compositionally biased region" description="Basic residues" evidence="4">
    <location>
        <begin position="201"/>
        <end position="210"/>
    </location>
</feature>
<feature type="compositionally biased region" description="Basic residues" evidence="4">
    <location>
        <begin position="234"/>
        <end position="244"/>
    </location>
</feature>
<feature type="modified residue" description="N-acetylserine" evidence="2">
    <location>
        <position position="2"/>
    </location>
</feature>
<feature type="sequence conflict" description="In Ref. 1; AAB82588." evidence="5" ref="1">
    <original>S</original>
    <variation>P</variation>
    <location>
        <position position="33"/>
    </location>
</feature>
<dbReference type="EMBL" id="AF005371">
    <property type="protein sequence ID" value="AAB81029.1"/>
    <property type="molecule type" value="mRNA"/>
</dbReference>
<dbReference type="EMBL" id="AF026521">
    <property type="protein sequence ID" value="AAB82588.1"/>
    <property type="molecule type" value="Genomic_DNA"/>
</dbReference>
<dbReference type="EMBL" id="FO080620">
    <property type="protein sequence ID" value="CCD65228.1"/>
    <property type="molecule type" value="Genomic_DNA"/>
</dbReference>
<dbReference type="PIR" id="F89030">
    <property type="entry name" value="F89030"/>
</dbReference>
<dbReference type="PIR" id="T37247">
    <property type="entry name" value="T37247"/>
</dbReference>
<dbReference type="RefSeq" id="NP_001379704.1">
    <property type="nucleotide sequence ID" value="NM_001392503.1"/>
</dbReference>
<dbReference type="RefSeq" id="NP_504277.1">
    <property type="nucleotide sequence ID" value="NM_071876.4"/>
</dbReference>
<dbReference type="SMR" id="O17536"/>
<dbReference type="FunCoup" id="O17536">
    <property type="interactions" value="266"/>
</dbReference>
<dbReference type="STRING" id="6239.C18G1.5.1"/>
<dbReference type="iPTMnet" id="O17536"/>
<dbReference type="PaxDb" id="6239-C18G1.5"/>
<dbReference type="PeptideAtlas" id="O17536"/>
<dbReference type="EnsemblMetazoa" id="C18G1.5.1">
    <property type="protein sequence ID" value="C18G1.5.1"/>
    <property type="gene ID" value="WBGene00001855"/>
</dbReference>
<dbReference type="GeneID" id="178866"/>
<dbReference type="UCSC" id="C18G1.5.1">
    <property type="organism name" value="c. elegans"/>
</dbReference>
<dbReference type="AGR" id="WB:WBGene00001855"/>
<dbReference type="WormBase" id="C18G1.5">
    <property type="protein sequence ID" value="CE17421"/>
    <property type="gene ID" value="WBGene00001855"/>
    <property type="gene designation" value="hil-4"/>
</dbReference>
<dbReference type="eggNOG" id="KOG4012">
    <property type="taxonomic scope" value="Eukaryota"/>
</dbReference>
<dbReference type="GeneTree" id="ENSGT00970000195980"/>
<dbReference type="HOGENOM" id="CLU_052897_1_1_1"/>
<dbReference type="InParanoid" id="O17536"/>
<dbReference type="OMA" id="MAAIMHL"/>
<dbReference type="OrthoDB" id="1110759at2759"/>
<dbReference type="PRO" id="PR:O17536"/>
<dbReference type="Proteomes" id="UP000001940">
    <property type="component" value="Chromosome V"/>
</dbReference>
<dbReference type="Bgee" id="WBGene00001855">
    <property type="expression patterns" value="Expressed in germ line (C elegans) and 4 other cell types or tissues"/>
</dbReference>
<dbReference type="GO" id="GO:0000786">
    <property type="term" value="C:nucleosome"/>
    <property type="evidence" value="ECO:0007669"/>
    <property type="project" value="InterPro"/>
</dbReference>
<dbReference type="GO" id="GO:0005634">
    <property type="term" value="C:nucleus"/>
    <property type="evidence" value="ECO:0000318"/>
    <property type="project" value="GO_Central"/>
</dbReference>
<dbReference type="GO" id="GO:0003690">
    <property type="term" value="F:double-stranded DNA binding"/>
    <property type="evidence" value="ECO:0000318"/>
    <property type="project" value="GO_Central"/>
</dbReference>
<dbReference type="GO" id="GO:0031492">
    <property type="term" value="F:nucleosomal DNA binding"/>
    <property type="evidence" value="ECO:0000318"/>
    <property type="project" value="GO_Central"/>
</dbReference>
<dbReference type="GO" id="GO:0030527">
    <property type="term" value="F:structural constituent of chromatin"/>
    <property type="evidence" value="ECO:0007669"/>
    <property type="project" value="InterPro"/>
</dbReference>
<dbReference type="GO" id="GO:0030261">
    <property type="term" value="P:chromosome condensation"/>
    <property type="evidence" value="ECO:0000318"/>
    <property type="project" value="GO_Central"/>
</dbReference>
<dbReference type="GO" id="GO:0045910">
    <property type="term" value="P:negative regulation of DNA recombination"/>
    <property type="evidence" value="ECO:0000318"/>
    <property type="project" value="GO_Central"/>
</dbReference>
<dbReference type="GO" id="GO:0006334">
    <property type="term" value="P:nucleosome assembly"/>
    <property type="evidence" value="ECO:0007669"/>
    <property type="project" value="InterPro"/>
</dbReference>
<dbReference type="CDD" id="cd00073">
    <property type="entry name" value="H15"/>
    <property type="match status" value="1"/>
</dbReference>
<dbReference type="FunFam" id="1.10.10.10:FF:000140">
    <property type="entry name" value="Histone H1.0"/>
    <property type="match status" value="1"/>
</dbReference>
<dbReference type="Gene3D" id="1.10.10.10">
    <property type="entry name" value="Winged helix-like DNA-binding domain superfamily/Winged helix DNA-binding domain"/>
    <property type="match status" value="1"/>
</dbReference>
<dbReference type="InterPro" id="IPR005819">
    <property type="entry name" value="H1/H5"/>
</dbReference>
<dbReference type="InterPro" id="IPR005818">
    <property type="entry name" value="Histone_H1/H5_H15"/>
</dbReference>
<dbReference type="InterPro" id="IPR036388">
    <property type="entry name" value="WH-like_DNA-bd_sf"/>
</dbReference>
<dbReference type="InterPro" id="IPR036390">
    <property type="entry name" value="WH_DNA-bd_sf"/>
</dbReference>
<dbReference type="PANTHER" id="PTHR11467:SF36">
    <property type="entry name" value="HISTONE 24-RELATED"/>
    <property type="match status" value="1"/>
</dbReference>
<dbReference type="PANTHER" id="PTHR11467">
    <property type="entry name" value="HISTONE H1"/>
    <property type="match status" value="1"/>
</dbReference>
<dbReference type="Pfam" id="PF00538">
    <property type="entry name" value="Linker_histone"/>
    <property type="match status" value="1"/>
</dbReference>
<dbReference type="PRINTS" id="PR00624">
    <property type="entry name" value="HISTONEH5"/>
</dbReference>
<dbReference type="SMART" id="SM00526">
    <property type="entry name" value="H15"/>
    <property type="match status" value="1"/>
</dbReference>
<dbReference type="SUPFAM" id="SSF46785">
    <property type="entry name" value="Winged helix' DNA-binding domain"/>
    <property type="match status" value="1"/>
</dbReference>
<dbReference type="PROSITE" id="PS51504">
    <property type="entry name" value="H15"/>
    <property type="match status" value="1"/>
</dbReference>
<gene>
    <name type="primary">hil-4</name>
    <name type="ORF">C18G1.5</name>
</gene>
<sequence>MSDVAVAADTTETPAAPTKASKATKASKATKASKATKAKTTKVPMVKADAAHPPFINMVTEAISSIKDRKGPSRAAILKYITTKYTLGDQANKINAHLRKALNKGLESNAFVQASGNGANGRFRLAEKTASVAKSPAAAKKDATGEKKATTTVAKKAATGEKKATTTVAKKAATGEKKATTTVAKKAAAGDKAKKTEVKVKKVKSPKKIAKSPVNKVTKSPVKKIAKSSSMKAAPKKAAAKPAKKAPAAAPEA</sequence>
<accession>O17536</accession>
<accession>O17426</accession>